<dbReference type="EC" id="2.5.1.78" evidence="1"/>
<dbReference type="EMBL" id="CP000284">
    <property type="protein sequence ID" value="ABE48762.1"/>
    <property type="molecule type" value="Genomic_DNA"/>
</dbReference>
<dbReference type="RefSeq" id="WP_011478859.1">
    <property type="nucleotide sequence ID" value="NC_007947.1"/>
</dbReference>
<dbReference type="SMR" id="Q1H425"/>
<dbReference type="STRING" id="265072.Mfla_0492"/>
<dbReference type="KEGG" id="mfa:Mfla_0492"/>
<dbReference type="eggNOG" id="COG0054">
    <property type="taxonomic scope" value="Bacteria"/>
</dbReference>
<dbReference type="HOGENOM" id="CLU_089358_1_2_4"/>
<dbReference type="OrthoDB" id="9809709at2"/>
<dbReference type="UniPathway" id="UPA00275">
    <property type="reaction ID" value="UER00404"/>
</dbReference>
<dbReference type="Proteomes" id="UP000002440">
    <property type="component" value="Chromosome"/>
</dbReference>
<dbReference type="GO" id="GO:0005829">
    <property type="term" value="C:cytosol"/>
    <property type="evidence" value="ECO:0007669"/>
    <property type="project" value="TreeGrafter"/>
</dbReference>
<dbReference type="GO" id="GO:0009349">
    <property type="term" value="C:riboflavin synthase complex"/>
    <property type="evidence" value="ECO:0007669"/>
    <property type="project" value="InterPro"/>
</dbReference>
<dbReference type="GO" id="GO:0000906">
    <property type="term" value="F:6,7-dimethyl-8-ribityllumazine synthase activity"/>
    <property type="evidence" value="ECO:0007669"/>
    <property type="project" value="UniProtKB-UniRule"/>
</dbReference>
<dbReference type="GO" id="GO:0009231">
    <property type="term" value="P:riboflavin biosynthetic process"/>
    <property type="evidence" value="ECO:0007669"/>
    <property type="project" value="UniProtKB-UniRule"/>
</dbReference>
<dbReference type="CDD" id="cd09209">
    <property type="entry name" value="Lumazine_synthase-I"/>
    <property type="match status" value="1"/>
</dbReference>
<dbReference type="Gene3D" id="3.40.50.960">
    <property type="entry name" value="Lumazine/riboflavin synthase"/>
    <property type="match status" value="1"/>
</dbReference>
<dbReference type="HAMAP" id="MF_00178">
    <property type="entry name" value="Lumazine_synth"/>
    <property type="match status" value="1"/>
</dbReference>
<dbReference type="InterPro" id="IPR034964">
    <property type="entry name" value="LS"/>
</dbReference>
<dbReference type="InterPro" id="IPR002180">
    <property type="entry name" value="LS/RS"/>
</dbReference>
<dbReference type="InterPro" id="IPR036467">
    <property type="entry name" value="LS/RS_sf"/>
</dbReference>
<dbReference type="NCBIfam" id="TIGR00114">
    <property type="entry name" value="lumazine-synth"/>
    <property type="match status" value="1"/>
</dbReference>
<dbReference type="PANTHER" id="PTHR21058:SF0">
    <property type="entry name" value="6,7-DIMETHYL-8-RIBITYLLUMAZINE SYNTHASE"/>
    <property type="match status" value="1"/>
</dbReference>
<dbReference type="PANTHER" id="PTHR21058">
    <property type="entry name" value="6,7-DIMETHYL-8-RIBITYLLUMAZINE SYNTHASE DMRL SYNTHASE LUMAZINE SYNTHASE"/>
    <property type="match status" value="1"/>
</dbReference>
<dbReference type="Pfam" id="PF00885">
    <property type="entry name" value="DMRL_synthase"/>
    <property type="match status" value="1"/>
</dbReference>
<dbReference type="SUPFAM" id="SSF52121">
    <property type="entry name" value="Lumazine synthase"/>
    <property type="match status" value="1"/>
</dbReference>
<gene>
    <name evidence="1" type="primary">ribH</name>
    <name type="ordered locus">Mfla_0492</name>
</gene>
<comment type="function">
    <text evidence="1">Catalyzes the formation of 6,7-dimethyl-8-ribityllumazine by condensation of 5-amino-6-(D-ribitylamino)uracil with 3,4-dihydroxy-2-butanone 4-phosphate. This is the penultimate step in the biosynthesis of riboflavin.</text>
</comment>
<comment type="catalytic activity">
    <reaction evidence="1">
        <text>(2S)-2-hydroxy-3-oxobutyl phosphate + 5-amino-6-(D-ribitylamino)uracil = 6,7-dimethyl-8-(1-D-ribityl)lumazine + phosphate + 2 H2O + H(+)</text>
        <dbReference type="Rhea" id="RHEA:26152"/>
        <dbReference type="ChEBI" id="CHEBI:15377"/>
        <dbReference type="ChEBI" id="CHEBI:15378"/>
        <dbReference type="ChEBI" id="CHEBI:15934"/>
        <dbReference type="ChEBI" id="CHEBI:43474"/>
        <dbReference type="ChEBI" id="CHEBI:58201"/>
        <dbReference type="ChEBI" id="CHEBI:58830"/>
        <dbReference type="EC" id="2.5.1.78"/>
    </reaction>
</comment>
<comment type="pathway">
    <text evidence="1">Cofactor biosynthesis; riboflavin biosynthesis; riboflavin from 2-hydroxy-3-oxobutyl phosphate and 5-amino-6-(D-ribitylamino)uracil: step 1/2.</text>
</comment>
<comment type="similarity">
    <text evidence="1">Belongs to the DMRL synthase family.</text>
</comment>
<reference key="1">
    <citation type="submission" date="2006-03" db="EMBL/GenBank/DDBJ databases">
        <title>Complete sequence of Methylobacillus flagellatus KT.</title>
        <authorList>
            <consortium name="US DOE Joint Genome Institute"/>
            <person name="Copeland A."/>
            <person name="Lucas S."/>
            <person name="Lapidus A."/>
            <person name="Barry K."/>
            <person name="Detter J.C."/>
            <person name="Glavina del Rio T."/>
            <person name="Hammon N."/>
            <person name="Israni S."/>
            <person name="Dalin E."/>
            <person name="Tice H."/>
            <person name="Pitluck S."/>
            <person name="Brettin T."/>
            <person name="Bruce D."/>
            <person name="Han C."/>
            <person name="Tapia R."/>
            <person name="Saunders E."/>
            <person name="Gilna P."/>
            <person name="Schmutz J."/>
            <person name="Larimer F."/>
            <person name="Land M."/>
            <person name="Kyrpides N."/>
            <person name="Anderson I."/>
            <person name="Richardson P."/>
        </authorList>
    </citation>
    <scope>NUCLEOTIDE SEQUENCE [LARGE SCALE GENOMIC DNA]</scope>
    <source>
        <strain>ATCC 51484 / DSM 6875 / VKM B-1610 / KT</strain>
    </source>
</reference>
<evidence type="ECO:0000255" key="1">
    <source>
        <dbReference type="HAMAP-Rule" id="MF_00178"/>
    </source>
</evidence>
<sequence>MKKITVDLNGKDLRIGIVLSRFNSNIGEGLLKACVDQLHKLGVADDDITLATVPGALEAPAILLQMADSEQFDGLIALGAVIRGETYHFEVVSNESARGISDVQLSTGIPIANAILTTENDEQAEARVAVKGAEAADVVVEMINLLKQL</sequence>
<keyword id="KW-1185">Reference proteome</keyword>
<keyword id="KW-0686">Riboflavin biosynthesis</keyword>
<keyword id="KW-0808">Transferase</keyword>
<accession>Q1H425</accession>
<name>RISB_METFK</name>
<feature type="chain" id="PRO_1000203796" description="6,7-dimethyl-8-ribityllumazine synthase">
    <location>
        <begin position="1"/>
        <end position="149"/>
    </location>
</feature>
<feature type="active site" description="Proton donor" evidence="1">
    <location>
        <position position="88"/>
    </location>
</feature>
<feature type="binding site" evidence="1">
    <location>
        <position position="22"/>
    </location>
    <ligand>
        <name>5-amino-6-(D-ribitylamino)uracil</name>
        <dbReference type="ChEBI" id="CHEBI:15934"/>
    </ligand>
</feature>
<feature type="binding site" evidence="1">
    <location>
        <begin position="56"/>
        <end position="58"/>
    </location>
    <ligand>
        <name>5-amino-6-(D-ribitylamino)uracil</name>
        <dbReference type="ChEBI" id="CHEBI:15934"/>
    </ligand>
</feature>
<feature type="binding site" evidence="1">
    <location>
        <begin position="80"/>
        <end position="82"/>
    </location>
    <ligand>
        <name>5-amino-6-(D-ribitylamino)uracil</name>
        <dbReference type="ChEBI" id="CHEBI:15934"/>
    </ligand>
</feature>
<feature type="binding site" evidence="1">
    <location>
        <begin position="85"/>
        <end position="86"/>
    </location>
    <ligand>
        <name>(2S)-2-hydroxy-3-oxobutyl phosphate</name>
        <dbReference type="ChEBI" id="CHEBI:58830"/>
    </ligand>
</feature>
<feature type="binding site" evidence="1">
    <location>
        <position position="113"/>
    </location>
    <ligand>
        <name>5-amino-6-(D-ribitylamino)uracil</name>
        <dbReference type="ChEBI" id="CHEBI:15934"/>
    </ligand>
</feature>
<feature type="binding site" evidence="1">
    <location>
        <position position="127"/>
    </location>
    <ligand>
        <name>(2S)-2-hydroxy-3-oxobutyl phosphate</name>
        <dbReference type="ChEBI" id="CHEBI:58830"/>
    </ligand>
</feature>
<protein>
    <recommendedName>
        <fullName evidence="1">6,7-dimethyl-8-ribityllumazine synthase</fullName>
        <shortName evidence="1">DMRL synthase</shortName>
        <shortName evidence="1">LS</shortName>
        <shortName evidence="1">Lumazine synthase</shortName>
        <ecNumber evidence="1">2.5.1.78</ecNumber>
    </recommendedName>
</protein>
<proteinExistence type="inferred from homology"/>
<organism>
    <name type="scientific">Methylobacillus flagellatus (strain ATCC 51484 / DSM 6875 / VKM B-1610 / KT)</name>
    <dbReference type="NCBI Taxonomy" id="265072"/>
    <lineage>
        <taxon>Bacteria</taxon>
        <taxon>Pseudomonadati</taxon>
        <taxon>Pseudomonadota</taxon>
        <taxon>Betaproteobacteria</taxon>
        <taxon>Nitrosomonadales</taxon>
        <taxon>Methylophilaceae</taxon>
        <taxon>Methylobacillus</taxon>
    </lineage>
</organism>